<proteinExistence type="evidence at protein level"/>
<protein>
    <recommendedName>
        <fullName>Protein phosphatase 1L</fullName>
        <ecNumber>3.1.3.16</ecNumber>
    </recommendedName>
    <alternativeName>
        <fullName>Protein phosphatase 1-like</fullName>
    </alternativeName>
    <alternativeName>
        <fullName>Protein phosphatase 2C isoform epsilon</fullName>
        <shortName>PP2C-epsilon</shortName>
    </alternativeName>
</protein>
<gene>
    <name type="primary">PPM1L</name>
    <name type="synonym">PP2CE</name>
</gene>
<feature type="chain" id="PRO_0000057754" description="Protein phosphatase 1L">
    <location>
        <begin position="1"/>
        <end position="360"/>
    </location>
</feature>
<feature type="topological domain" description="Extracellular" evidence="2">
    <location>
        <begin position="1"/>
        <end position="25"/>
    </location>
</feature>
<feature type="transmembrane region" description="Helical" evidence="2">
    <location>
        <begin position="26"/>
        <end position="42"/>
    </location>
</feature>
<feature type="topological domain" description="Cytoplasmic" evidence="2">
    <location>
        <begin position="43"/>
        <end position="360"/>
    </location>
</feature>
<feature type="domain" description="PPM-type phosphatase" evidence="3">
    <location>
        <begin position="92"/>
        <end position="351"/>
    </location>
</feature>
<feature type="binding site" evidence="1">
    <location>
        <position position="128"/>
    </location>
    <ligand>
        <name>Mn(2+)</name>
        <dbReference type="ChEBI" id="CHEBI:29035"/>
        <label>1</label>
    </ligand>
</feature>
<feature type="binding site" evidence="1">
    <location>
        <position position="128"/>
    </location>
    <ligand>
        <name>Mn(2+)</name>
        <dbReference type="ChEBI" id="CHEBI:29035"/>
        <label>2</label>
    </ligand>
</feature>
<feature type="binding site" evidence="1">
    <location>
        <position position="129"/>
    </location>
    <ligand>
        <name>Mn(2+)</name>
        <dbReference type="ChEBI" id="CHEBI:29035"/>
        <label>1</label>
    </ligand>
</feature>
<feature type="binding site" evidence="1">
    <location>
        <position position="302"/>
    </location>
    <ligand>
        <name>Mn(2+)</name>
        <dbReference type="ChEBI" id="CHEBI:29035"/>
        <label>2</label>
    </ligand>
</feature>
<feature type="binding site" evidence="1">
    <location>
        <position position="342"/>
    </location>
    <ligand>
        <name>Mn(2+)</name>
        <dbReference type="ChEBI" id="CHEBI:29035"/>
        <label>2</label>
    </ligand>
</feature>
<feature type="splice variant" id="VSP_016927" description="In isoform 2." evidence="6">
    <location>
        <begin position="1"/>
        <end position="179"/>
    </location>
</feature>
<feature type="splice variant" id="VSP_037552" description="In isoform 3." evidence="7">
    <location>
        <begin position="1"/>
        <end position="127"/>
    </location>
</feature>
<feature type="splice variant" id="VSP_037553" description="In isoform 3." evidence="7">
    <original>DGHGGE</original>
    <variation>MPAFST</variation>
    <location>
        <begin position="128"/>
        <end position="133"/>
    </location>
</feature>
<feature type="splice variant" id="VSP_037554" description="In isoform 4." evidence="7">
    <original>GTT</original>
    <variation>VTF</variation>
    <location>
        <begin position="192"/>
        <end position="194"/>
    </location>
</feature>
<feature type="splice variant" id="VSP_037555" description="In isoform 4." evidence="7">
    <location>
        <begin position="195"/>
        <end position="360"/>
    </location>
</feature>
<feature type="sequence variant" id="VAR_050622" description="In dbSNP:rs13326359.">
    <original>A</original>
    <variation>S</variation>
    <location>
        <position position="262"/>
    </location>
</feature>
<keyword id="KW-0025">Alternative splicing</keyword>
<keyword id="KW-0378">Hydrolase</keyword>
<keyword id="KW-0460">Magnesium</keyword>
<keyword id="KW-0464">Manganese</keyword>
<keyword id="KW-0472">Membrane</keyword>
<keyword id="KW-0479">Metal-binding</keyword>
<keyword id="KW-0904">Protein phosphatase</keyword>
<keyword id="KW-1267">Proteomics identification</keyword>
<keyword id="KW-1185">Reference proteome</keyword>
<keyword id="KW-0812">Transmembrane</keyword>
<keyword id="KW-1133">Transmembrane helix</keyword>
<accession>Q5SGD2</accession>
<accession>Q2M3J2</accession>
<accession>Q96NM7</accession>
<reference key="1">
    <citation type="journal article" date="2004" name="Mol. Biol. Rep.">
        <title>Molecular cloning and characterization of a novel human protein phosphatase 2C cDNA (PP2C epsilon).</title>
        <authorList>
            <person name="Jin F."/>
            <person name="Ji C."/>
            <person name="Liu L."/>
            <person name="Dai J."/>
            <person name="Gu S."/>
            <person name="Sun X."/>
            <person name="Xie Y."/>
            <person name="Mao Y."/>
        </authorList>
    </citation>
    <scope>NUCLEOTIDE SEQUENCE [MRNA] (ISOFORM 1)</scope>
    <scope>TISSUE SPECIFICITY</scope>
    <source>
        <tissue>Fetal brain</tissue>
    </source>
</reference>
<reference key="2">
    <citation type="journal article" date="2004" name="Nat. Genet.">
        <title>Complete sequencing and characterization of 21,243 full-length human cDNAs.</title>
        <authorList>
            <person name="Ota T."/>
            <person name="Suzuki Y."/>
            <person name="Nishikawa T."/>
            <person name="Otsuki T."/>
            <person name="Sugiyama T."/>
            <person name="Irie R."/>
            <person name="Wakamatsu A."/>
            <person name="Hayashi K."/>
            <person name="Sato H."/>
            <person name="Nagai K."/>
            <person name="Kimura K."/>
            <person name="Makita H."/>
            <person name="Sekine M."/>
            <person name="Obayashi M."/>
            <person name="Nishi T."/>
            <person name="Shibahara T."/>
            <person name="Tanaka T."/>
            <person name="Ishii S."/>
            <person name="Yamamoto J."/>
            <person name="Saito K."/>
            <person name="Kawai Y."/>
            <person name="Isono Y."/>
            <person name="Nakamura Y."/>
            <person name="Nagahari K."/>
            <person name="Murakami K."/>
            <person name="Yasuda T."/>
            <person name="Iwayanagi T."/>
            <person name="Wagatsuma M."/>
            <person name="Shiratori A."/>
            <person name="Sudo H."/>
            <person name="Hosoiri T."/>
            <person name="Kaku Y."/>
            <person name="Kodaira H."/>
            <person name="Kondo H."/>
            <person name="Sugawara M."/>
            <person name="Takahashi M."/>
            <person name="Kanda K."/>
            <person name="Yokoi T."/>
            <person name="Furuya T."/>
            <person name="Kikkawa E."/>
            <person name="Omura Y."/>
            <person name="Abe K."/>
            <person name="Kamihara K."/>
            <person name="Katsuta N."/>
            <person name="Sato K."/>
            <person name="Tanikawa M."/>
            <person name="Yamazaki M."/>
            <person name="Ninomiya K."/>
            <person name="Ishibashi T."/>
            <person name="Yamashita H."/>
            <person name="Murakawa K."/>
            <person name="Fujimori K."/>
            <person name="Tanai H."/>
            <person name="Kimata M."/>
            <person name="Watanabe M."/>
            <person name="Hiraoka S."/>
            <person name="Chiba Y."/>
            <person name="Ishida S."/>
            <person name="Ono Y."/>
            <person name="Takiguchi S."/>
            <person name="Watanabe S."/>
            <person name="Yosida M."/>
            <person name="Hotuta T."/>
            <person name="Kusano J."/>
            <person name="Kanehori K."/>
            <person name="Takahashi-Fujii A."/>
            <person name="Hara H."/>
            <person name="Tanase T.-O."/>
            <person name="Nomura Y."/>
            <person name="Togiya S."/>
            <person name="Komai F."/>
            <person name="Hara R."/>
            <person name="Takeuchi K."/>
            <person name="Arita M."/>
            <person name="Imose N."/>
            <person name="Musashino K."/>
            <person name="Yuuki H."/>
            <person name="Oshima A."/>
            <person name="Sasaki N."/>
            <person name="Aotsuka S."/>
            <person name="Yoshikawa Y."/>
            <person name="Matsunawa H."/>
            <person name="Ichihara T."/>
            <person name="Shiohata N."/>
            <person name="Sano S."/>
            <person name="Moriya S."/>
            <person name="Momiyama H."/>
            <person name="Satoh N."/>
            <person name="Takami S."/>
            <person name="Terashima Y."/>
            <person name="Suzuki O."/>
            <person name="Nakagawa S."/>
            <person name="Senoh A."/>
            <person name="Mizoguchi H."/>
            <person name="Goto Y."/>
            <person name="Shimizu F."/>
            <person name="Wakebe H."/>
            <person name="Hishigaki H."/>
            <person name="Watanabe T."/>
            <person name="Sugiyama A."/>
            <person name="Takemoto M."/>
            <person name="Kawakami B."/>
            <person name="Yamazaki M."/>
            <person name="Watanabe K."/>
            <person name="Kumagai A."/>
            <person name="Itakura S."/>
            <person name="Fukuzumi Y."/>
            <person name="Fujimori Y."/>
            <person name="Komiyama M."/>
            <person name="Tashiro H."/>
            <person name="Tanigami A."/>
            <person name="Fujiwara T."/>
            <person name="Ono T."/>
            <person name="Yamada K."/>
            <person name="Fujii Y."/>
            <person name="Ozaki K."/>
            <person name="Hirao M."/>
            <person name="Ohmori Y."/>
            <person name="Kawabata A."/>
            <person name="Hikiji T."/>
            <person name="Kobatake N."/>
            <person name="Inagaki H."/>
            <person name="Ikema Y."/>
            <person name="Okamoto S."/>
            <person name="Okitani R."/>
            <person name="Kawakami T."/>
            <person name="Noguchi S."/>
            <person name="Itoh T."/>
            <person name="Shigeta K."/>
            <person name="Senba T."/>
            <person name="Matsumura K."/>
            <person name="Nakajima Y."/>
            <person name="Mizuno T."/>
            <person name="Morinaga M."/>
            <person name="Sasaki M."/>
            <person name="Togashi T."/>
            <person name="Oyama M."/>
            <person name="Hata H."/>
            <person name="Watanabe M."/>
            <person name="Komatsu T."/>
            <person name="Mizushima-Sugano J."/>
            <person name="Satoh T."/>
            <person name="Shirai Y."/>
            <person name="Takahashi Y."/>
            <person name="Nakagawa K."/>
            <person name="Okumura K."/>
            <person name="Nagase T."/>
            <person name="Nomura N."/>
            <person name="Kikuchi H."/>
            <person name="Masuho Y."/>
            <person name="Yamashita R."/>
            <person name="Nakai K."/>
            <person name="Yada T."/>
            <person name="Nakamura Y."/>
            <person name="Ohara O."/>
            <person name="Isogai T."/>
            <person name="Sugano S."/>
        </authorList>
    </citation>
    <scope>NUCLEOTIDE SEQUENCE [LARGE SCALE MRNA] (ISOFORM 2)</scope>
    <source>
        <tissue>Brain</tissue>
    </source>
</reference>
<reference key="3">
    <citation type="journal article" date="2004" name="Genome Res.">
        <title>The status, quality, and expansion of the NIH full-length cDNA project: the Mammalian Gene Collection (MGC).</title>
        <authorList>
            <consortium name="The MGC Project Team"/>
        </authorList>
    </citation>
    <scope>NUCLEOTIDE SEQUENCE [LARGE SCALE MRNA] (ISOFORMS 3 AND 4)</scope>
    <source>
        <tissue>Brain</tissue>
    </source>
</reference>
<reference key="4">
    <citation type="journal article" date="2007" name="Biochem. J.">
        <title>Regulation of apoptosis signal-regulating kinase 1 by protein phosphatase 2Cepsilon.</title>
        <authorList>
            <person name="Saito J."/>
            <person name="Toriumi S."/>
            <person name="Awano K."/>
            <person name="Ichijo H."/>
            <person name="Sasaki K."/>
            <person name="Kobayashi T."/>
            <person name="Tamura S."/>
        </authorList>
    </citation>
    <scope>FUNCTION</scope>
    <scope>INTERACTION WITH MAP3K5</scope>
</reference>
<dbReference type="EC" id="3.1.3.16"/>
<dbReference type="EMBL" id="AY337264">
    <property type="protein sequence ID" value="AAR00269.1"/>
    <property type="molecule type" value="mRNA"/>
</dbReference>
<dbReference type="EMBL" id="AK055115">
    <property type="protein sequence ID" value="BAB70856.1"/>
    <property type="molecule type" value="mRNA"/>
</dbReference>
<dbReference type="EMBL" id="BC104885">
    <property type="protein sequence ID" value="AAI04886.1"/>
    <property type="molecule type" value="mRNA"/>
</dbReference>
<dbReference type="EMBL" id="BC104887">
    <property type="protein sequence ID" value="AAI04888.1"/>
    <property type="molecule type" value="mRNA"/>
</dbReference>
<dbReference type="EMBL" id="BC110801">
    <property type="status" value="NOT_ANNOTATED_CDS"/>
    <property type="molecule type" value="mRNA"/>
</dbReference>
<dbReference type="CCDS" id="CCDS33886.1">
    <molecule id="Q5SGD2-1"/>
</dbReference>
<dbReference type="CCDS" id="CCDS82868.1">
    <molecule id="Q5SGD2-3"/>
</dbReference>
<dbReference type="CCDS" id="CCDS82869.1">
    <molecule id="Q5SGD2-2"/>
</dbReference>
<dbReference type="RefSeq" id="NP_001304840.1">
    <molecule id="Q5SGD2-3"/>
    <property type="nucleotide sequence ID" value="NM_001317911.2"/>
</dbReference>
<dbReference type="RefSeq" id="NP_001304841.1">
    <molecule id="Q5SGD2-2"/>
    <property type="nucleotide sequence ID" value="NM_001317912.2"/>
</dbReference>
<dbReference type="RefSeq" id="NP_640338.2">
    <molecule id="Q5SGD2-1"/>
    <property type="nucleotide sequence ID" value="NM_139245.4"/>
</dbReference>
<dbReference type="SMR" id="Q5SGD2"/>
<dbReference type="BioGRID" id="127400">
    <property type="interactions" value="25"/>
</dbReference>
<dbReference type="FunCoup" id="Q5SGD2">
    <property type="interactions" value="283"/>
</dbReference>
<dbReference type="IntAct" id="Q5SGD2">
    <property type="interactions" value="13"/>
</dbReference>
<dbReference type="MINT" id="Q5SGD2"/>
<dbReference type="STRING" id="9606.ENSP00000417659"/>
<dbReference type="DEPOD" id="PPM1L"/>
<dbReference type="GlyGen" id="Q5SGD2">
    <property type="glycosylation" value="3 sites, 2 N-linked glycans (2 sites), 1 O-linked glycan (1 site)"/>
</dbReference>
<dbReference type="iPTMnet" id="Q5SGD2"/>
<dbReference type="PhosphoSitePlus" id="Q5SGD2"/>
<dbReference type="BioMuta" id="PPM1L"/>
<dbReference type="DMDM" id="74743437"/>
<dbReference type="jPOST" id="Q5SGD2"/>
<dbReference type="MassIVE" id="Q5SGD2"/>
<dbReference type="PaxDb" id="9606-ENSP00000417659"/>
<dbReference type="PeptideAtlas" id="Q5SGD2"/>
<dbReference type="ProteomicsDB" id="63756">
    <molecule id="Q5SGD2-1"/>
</dbReference>
<dbReference type="ProteomicsDB" id="63757">
    <molecule id="Q5SGD2-2"/>
</dbReference>
<dbReference type="ProteomicsDB" id="63758">
    <molecule id="Q5SGD2-3"/>
</dbReference>
<dbReference type="ProteomicsDB" id="63759">
    <molecule id="Q5SGD2-4"/>
</dbReference>
<dbReference type="Pumba" id="Q5SGD2"/>
<dbReference type="TopDownProteomics" id="Q5SGD2-1">
    <molecule id="Q5SGD2-1"/>
</dbReference>
<dbReference type="Antibodypedia" id="18529">
    <property type="antibodies" value="147 antibodies from 28 providers"/>
</dbReference>
<dbReference type="DNASU" id="151742"/>
<dbReference type="Ensembl" id="ENST00000295839.9">
    <molecule id="Q5SGD2-3"/>
    <property type="protein sequence ID" value="ENSP00000295839.9"/>
    <property type="gene ID" value="ENSG00000163590.14"/>
</dbReference>
<dbReference type="Ensembl" id="ENST00000464260.5">
    <molecule id="Q5SGD2-2"/>
    <property type="protein sequence ID" value="ENSP00000420746.1"/>
    <property type="gene ID" value="ENSG00000163590.14"/>
</dbReference>
<dbReference type="Ensembl" id="ENST00000497343.5">
    <molecule id="Q5SGD2-4"/>
    <property type="protein sequence ID" value="ENSP00000420354.1"/>
    <property type="gene ID" value="ENSG00000163590.14"/>
</dbReference>
<dbReference type="Ensembl" id="ENST00000498165.6">
    <molecule id="Q5SGD2-1"/>
    <property type="protein sequence ID" value="ENSP00000417659.1"/>
    <property type="gene ID" value="ENSG00000163590.14"/>
</dbReference>
<dbReference type="GeneID" id="151742"/>
<dbReference type="KEGG" id="hsa:151742"/>
<dbReference type="MANE-Select" id="ENST00000498165.6">
    <property type="protein sequence ID" value="ENSP00000417659.1"/>
    <property type="RefSeq nucleotide sequence ID" value="NM_139245.4"/>
    <property type="RefSeq protein sequence ID" value="NP_640338.2"/>
</dbReference>
<dbReference type="UCSC" id="uc003fds.4">
    <molecule id="Q5SGD2-1"/>
    <property type="organism name" value="human"/>
</dbReference>
<dbReference type="AGR" id="HGNC:16381"/>
<dbReference type="CTD" id="151742"/>
<dbReference type="DisGeNET" id="151742"/>
<dbReference type="GeneCards" id="PPM1L"/>
<dbReference type="HGNC" id="HGNC:16381">
    <property type="gene designation" value="PPM1L"/>
</dbReference>
<dbReference type="HPA" id="ENSG00000163590">
    <property type="expression patterns" value="Low tissue specificity"/>
</dbReference>
<dbReference type="MalaCards" id="PPM1L"/>
<dbReference type="MIM" id="611931">
    <property type="type" value="gene"/>
</dbReference>
<dbReference type="neXtProt" id="NX_Q5SGD2"/>
<dbReference type="OpenTargets" id="ENSG00000163590"/>
<dbReference type="PharmGKB" id="PA134871016"/>
<dbReference type="VEuPathDB" id="HostDB:ENSG00000163590"/>
<dbReference type="eggNOG" id="KOG0698">
    <property type="taxonomic scope" value="Eukaryota"/>
</dbReference>
<dbReference type="GeneTree" id="ENSGT00940000157030"/>
<dbReference type="HOGENOM" id="CLU_013173_11_1_1"/>
<dbReference type="InParanoid" id="Q5SGD2"/>
<dbReference type="OMA" id="IDDQEAC"/>
<dbReference type="OrthoDB" id="343114at2759"/>
<dbReference type="PAN-GO" id="Q5SGD2">
    <property type="GO annotations" value="1 GO annotation based on evolutionary models"/>
</dbReference>
<dbReference type="PhylomeDB" id="Q5SGD2"/>
<dbReference type="TreeFam" id="TF332888"/>
<dbReference type="BRENDA" id="3.1.3.16">
    <property type="organism ID" value="2681"/>
</dbReference>
<dbReference type="PathwayCommons" id="Q5SGD2"/>
<dbReference type="Reactome" id="R-HSA-1660661">
    <property type="pathway name" value="Sphingolipid de novo biosynthesis"/>
</dbReference>
<dbReference type="SignaLink" id="Q5SGD2"/>
<dbReference type="SIGNOR" id="Q5SGD2"/>
<dbReference type="BioGRID-ORCS" id="151742">
    <property type="hits" value="5 hits in 1159 CRISPR screens"/>
</dbReference>
<dbReference type="CD-CODE" id="91857CE7">
    <property type="entry name" value="Nucleolus"/>
</dbReference>
<dbReference type="ChiTaRS" id="PPM1L">
    <property type="organism name" value="human"/>
</dbReference>
<dbReference type="GenomeRNAi" id="151742"/>
<dbReference type="Pharos" id="Q5SGD2">
    <property type="development level" value="Tbio"/>
</dbReference>
<dbReference type="PRO" id="PR:Q5SGD2"/>
<dbReference type="Proteomes" id="UP000005640">
    <property type="component" value="Chromosome 3"/>
</dbReference>
<dbReference type="RNAct" id="Q5SGD2">
    <property type="molecule type" value="protein"/>
</dbReference>
<dbReference type="Bgee" id="ENSG00000163590">
    <property type="expression patterns" value="Expressed in Brodmann (1909) area 23 and 192 other cell types or tissues"/>
</dbReference>
<dbReference type="GO" id="GO:0005789">
    <property type="term" value="C:endoplasmic reticulum membrane"/>
    <property type="evidence" value="ECO:0000304"/>
    <property type="project" value="Reactome"/>
</dbReference>
<dbReference type="GO" id="GO:0070062">
    <property type="term" value="C:extracellular exosome"/>
    <property type="evidence" value="ECO:0007005"/>
    <property type="project" value="UniProtKB"/>
</dbReference>
<dbReference type="GO" id="GO:0046872">
    <property type="term" value="F:metal ion binding"/>
    <property type="evidence" value="ECO:0007669"/>
    <property type="project" value="UniProtKB-KW"/>
</dbReference>
<dbReference type="GO" id="GO:0004722">
    <property type="term" value="F:protein serine/threonine phosphatase activity"/>
    <property type="evidence" value="ECO:0000304"/>
    <property type="project" value="Reactome"/>
</dbReference>
<dbReference type="GO" id="GO:0007178">
    <property type="term" value="P:cell surface receptor protein serine/threonine kinase signaling pathway"/>
    <property type="evidence" value="ECO:0007669"/>
    <property type="project" value="Ensembl"/>
</dbReference>
<dbReference type="GO" id="GO:0000165">
    <property type="term" value="P:MAPK cascade"/>
    <property type="evidence" value="ECO:0007669"/>
    <property type="project" value="Ensembl"/>
</dbReference>
<dbReference type="GO" id="GO:0007165">
    <property type="term" value="P:signal transduction"/>
    <property type="evidence" value="ECO:0000318"/>
    <property type="project" value="GO_Central"/>
</dbReference>
<dbReference type="GO" id="GO:0030148">
    <property type="term" value="P:sphingolipid biosynthetic process"/>
    <property type="evidence" value="ECO:0000304"/>
    <property type="project" value="Reactome"/>
</dbReference>
<dbReference type="CDD" id="cd00143">
    <property type="entry name" value="PP2Cc"/>
    <property type="match status" value="1"/>
</dbReference>
<dbReference type="FunFam" id="3.60.40.10:FF:000017">
    <property type="entry name" value="phosphatase 1L isoform X1"/>
    <property type="match status" value="1"/>
</dbReference>
<dbReference type="Gene3D" id="3.60.40.10">
    <property type="entry name" value="PPM-type phosphatase domain"/>
    <property type="match status" value="1"/>
</dbReference>
<dbReference type="InterPro" id="IPR015655">
    <property type="entry name" value="PP2C"/>
</dbReference>
<dbReference type="InterPro" id="IPR000222">
    <property type="entry name" value="PP2C_BS"/>
</dbReference>
<dbReference type="InterPro" id="IPR036457">
    <property type="entry name" value="PPM-type-like_dom_sf"/>
</dbReference>
<dbReference type="InterPro" id="IPR001932">
    <property type="entry name" value="PPM-type_phosphatase-like_dom"/>
</dbReference>
<dbReference type="PANTHER" id="PTHR47992">
    <property type="entry name" value="PROTEIN PHOSPHATASE"/>
    <property type="match status" value="1"/>
</dbReference>
<dbReference type="Pfam" id="PF00481">
    <property type="entry name" value="PP2C"/>
    <property type="match status" value="1"/>
</dbReference>
<dbReference type="SMART" id="SM00331">
    <property type="entry name" value="PP2C_SIG"/>
    <property type="match status" value="1"/>
</dbReference>
<dbReference type="SMART" id="SM00332">
    <property type="entry name" value="PP2Cc"/>
    <property type="match status" value="1"/>
</dbReference>
<dbReference type="SUPFAM" id="SSF81606">
    <property type="entry name" value="PP2C-like"/>
    <property type="match status" value="1"/>
</dbReference>
<dbReference type="PROSITE" id="PS01032">
    <property type="entry name" value="PPM_1"/>
    <property type="match status" value="1"/>
</dbReference>
<dbReference type="PROSITE" id="PS51746">
    <property type="entry name" value="PPM_2"/>
    <property type="match status" value="1"/>
</dbReference>
<comment type="function">
    <text evidence="5">Acts as a suppressor of the SAPK signaling pathways by associating with and dephosphorylating MAP3K7/TAK1 and MAP3K5, and by attenuating the association between MAP3K7/TAK1 and MAP2K4 or MAP2K6.</text>
</comment>
<comment type="catalytic activity">
    <reaction>
        <text>O-phospho-L-seryl-[protein] + H2O = L-seryl-[protein] + phosphate</text>
        <dbReference type="Rhea" id="RHEA:20629"/>
        <dbReference type="Rhea" id="RHEA-COMP:9863"/>
        <dbReference type="Rhea" id="RHEA-COMP:11604"/>
        <dbReference type="ChEBI" id="CHEBI:15377"/>
        <dbReference type="ChEBI" id="CHEBI:29999"/>
        <dbReference type="ChEBI" id="CHEBI:43474"/>
        <dbReference type="ChEBI" id="CHEBI:83421"/>
        <dbReference type="EC" id="3.1.3.16"/>
    </reaction>
</comment>
<comment type="catalytic activity">
    <reaction>
        <text>O-phospho-L-threonyl-[protein] + H2O = L-threonyl-[protein] + phosphate</text>
        <dbReference type="Rhea" id="RHEA:47004"/>
        <dbReference type="Rhea" id="RHEA-COMP:11060"/>
        <dbReference type="Rhea" id="RHEA-COMP:11605"/>
        <dbReference type="ChEBI" id="CHEBI:15377"/>
        <dbReference type="ChEBI" id="CHEBI:30013"/>
        <dbReference type="ChEBI" id="CHEBI:43474"/>
        <dbReference type="ChEBI" id="CHEBI:61977"/>
        <dbReference type="EC" id="3.1.3.16"/>
    </reaction>
</comment>
<comment type="cofactor">
    <cofactor evidence="1">
        <name>Mg(2+)</name>
        <dbReference type="ChEBI" id="CHEBI:18420"/>
    </cofactor>
    <cofactor evidence="1">
        <name>Mn(2+)</name>
        <dbReference type="ChEBI" id="CHEBI:29035"/>
    </cofactor>
    <text evidence="1">Binds 2 magnesium or manganese ions per subunit.</text>
</comment>
<comment type="subunit">
    <text evidence="1 5">Interacts with MAP3K7/TAK1 (By similarity). Interacts with MAP3K5.</text>
</comment>
<comment type="subcellular location">
    <subcellularLocation>
        <location evidence="8">Membrane</location>
        <topology evidence="8">Single-pass type I membrane protein</topology>
    </subcellularLocation>
</comment>
<comment type="alternative products">
    <event type="alternative splicing"/>
    <isoform>
        <id>Q5SGD2-1</id>
        <name>1</name>
        <sequence type="displayed"/>
    </isoform>
    <isoform>
        <id>Q5SGD2-2</id>
        <name>2</name>
        <sequence type="described" ref="VSP_016927"/>
    </isoform>
    <isoform>
        <id>Q5SGD2-3</id>
        <name>3</name>
        <sequence type="described" ref="VSP_037552 VSP_037553"/>
    </isoform>
    <isoform>
        <id>Q5SGD2-4</id>
        <name>4</name>
        <sequence type="described" ref="VSP_037554 VSP_037555"/>
    </isoform>
</comment>
<comment type="tissue specificity">
    <text evidence="4">Ubiquitous. Highly expressed in heart, placenta, lung, liver, kidney and pancreas.</text>
</comment>
<comment type="similarity">
    <text evidence="8">Belongs to the PP2C family.</text>
</comment>
<evidence type="ECO:0000250" key="1"/>
<evidence type="ECO:0000255" key="2"/>
<evidence type="ECO:0000255" key="3">
    <source>
        <dbReference type="PROSITE-ProRule" id="PRU01082"/>
    </source>
</evidence>
<evidence type="ECO:0000269" key="4">
    <source>
    </source>
</evidence>
<evidence type="ECO:0000269" key="5">
    <source>
    </source>
</evidence>
<evidence type="ECO:0000303" key="6">
    <source>
    </source>
</evidence>
<evidence type="ECO:0000303" key="7">
    <source>
    </source>
</evidence>
<evidence type="ECO:0000305" key="8"/>
<name>PPM1L_HUMAN</name>
<sequence>MIEDTMTLLSLLGRIMRYFLLRPETLFLLCISLALWSYFFHTDEVKTIVKSSRDAVKMVKGKVAEIMQNDRLGGLDVLEAEFSKTWEFKNHNVAVYSIQGRRDHMEDRFEVLTDLANKTHPSIFGIFDGHGGETAAEYVKSRLPEALKQHLQDYEKDKENSVLSYQTILEQQILSIDREMLEKLTVSYDEAGTTCLIALLSDKDLTVANVGDSRGVLCDKDGNAIPLSHDHKPYQLKERKRIKRAGGFISFNGSWRVQGILAMSRSLGDYPLKNLNVVIPDPDILTFDLDKLQPEFMILASDGLWDAFSNEEAVRFIKERLDEPHFGAKSIVLQSFYRGCPDNITVMVVKFRNSSKTEEQ</sequence>
<organism>
    <name type="scientific">Homo sapiens</name>
    <name type="common">Human</name>
    <dbReference type="NCBI Taxonomy" id="9606"/>
    <lineage>
        <taxon>Eukaryota</taxon>
        <taxon>Metazoa</taxon>
        <taxon>Chordata</taxon>
        <taxon>Craniata</taxon>
        <taxon>Vertebrata</taxon>
        <taxon>Euteleostomi</taxon>
        <taxon>Mammalia</taxon>
        <taxon>Eutheria</taxon>
        <taxon>Euarchontoglires</taxon>
        <taxon>Primates</taxon>
        <taxon>Haplorrhini</taxon>
        <taxon>Catarrhini</taxon>
        <taxon>Hominidae</taxon>
        <taxon>Homo</taxon>
    </lineage>
</organism>